<keyword id="KW-0067">ATP-binding</keyword>
<keyword id="KW-0963">Cytoplasm</keyword>
<keyword id="KW-0547">Nucleotide-binding</keyword>
<keyword id="KW-0539">Nucleus</keyword>
<keyword id="KW-0647">Proteasome</keyword>
<keyword id="KW-1185">Reference proteome</keyword>
<evidence type="ECO:0000250" key="1"/>
<evidence type="ECO:0000255" key="2"/>
<evidence type="ECO:0000256" key="3">
    <source>
        <dbReference type="SAM" id="MobiDB-lite"/>
    </source>
</evidence>
<evidence type="ECO:0000269" key="4">
    <source>
    </source>
</evidence>
<evidence type="ECO:0000305" key="5"/>
<proteinExistence type="evidence at protein level"/>
<name>PRS4_DICDI</name>
<protein>
    <recommendedName>
        <fullName>26S proteasome regulatory subunit 4 homolog</fullName>
    </recommendedName>
    <alternativeName>
        <fullName>Tat-binding protein alpha</fullName>
        <shortName>DdTBPalpha</shortName>
    </alternativeName>
</protein>
<accession>Q55BV5</accession>
<accession>Q9TX40</accession>
<gene>
    <name type="primary">psmC1</name>
    <name type="ORF">DDB_G0270784</name>
</gene>
<comment type="function">
    <text evidence="1">The 26S proteasome is involved in the ATP-dependent degradation of ubiquitinated proteins. The regulatory (or ATPase) complex confers ATP dependency and substrate specificity to the 26S complex (By similarity). Plays an important role in regulating both growth and multicellular development.</text>
</comment>
<comment type="subcellular location">
    <subcellularLocation>
        <location evidence="1">Cytoplasm</location>
    </subcellularLocation>
    <subcellularLocation>
        <location evidence="1">Nucleus</location>
    </subcellularLocation>
</comment>
<comment type="developmental stage">
    <text evidence="4">Developmentally regulated with highest levels during growth and early development.</text>
</comment>
<comment type="similarity">
    <text evidence="5">Belongs to the AAA ATPase family.</text>
</comment>
<feature type="chain" id="PRO_0000328368" description="26S proteasome regulatory subunit 4 homolog">
    <location>
        <begin position="1"/>
        <end position="439"/>
    </location>
</feature>
<feature type="region of interest" description="Disordered" evidence="3">
    <location>
        <begin position="1"/>
        <end position="46"/>
    </location>
</feature>
<feature type="binding site" evidence="2">
    <location>
        <begin position="225"/>
        <end position="232"/>
    </location>
    <ligand>
        <name>ATP</name>
        <dbReference type="ChEBI" id="CHEBI:30616"/>
    </ligand>
</feature>
<feature type="sequence conflict" description="In Ref. 1; no nucleotide entry." evidence="5" ref="1">
    <original>K</original>
    <variation>H</variation>
    <location>
        <position position="96"/>
    </location>
</feature>
<feature type="sequence conflict" description="In Ref. 1; no nucleotide entry." evidence="5" ref="1">
    <original>I</original>
    <variation>V</variation>
    <location>
        <position position="114"/>
    </location>
</feature>
<feature type="sequence conflict" description="In Ref. 1; no nucleotide entry." evidence="5" ref="1">
    <original>M</original>
    <variation>I</variation>
    <location>
        <position position="173"/>
    </location>
</feature>
<feature type="sequence conflict" description="In Ref. 1; no nucleotide entry." evidence="5" ref="1">
    <original>E</original>
    <variation>K</variation>
    <location>
        <position position="211"/>
    </location>
</feature>
<feature type="sequence conflict" description="In Ref. 1; no nucleotide entry." evidence="5" ref="1">
    <original>TSATFL</original>
    <variation>YLYTFK</variation>
    <location>
        <begin position="242"/>
        <end position="247"/>
    </location>
</feature>
<feature type="sequence conflict" description="In Ref. 1; no nucleotide entry." evidence="5" ref="1">
    <original>L</original>
    <variation>K</variation>
    <location>
        <position position="254"/>
    </location>
</feature>
<feature type="sequence conflict" description="In Ref. 1; no nucleotide entry." evidence="5" ref="1">
    <original>K</original>
    <variation>R</variation>
    <location>
        <position position="264"/>
    </location>
</feature>
<feature type="sequence conflict" description="In Ref. 1; no nucleotide entry." evidence="5" ref="1">
    <original>F</original>
    <variation>Y</variation>
    <location>
        <position position="270"/>
    </location>
</feature>
<feature type="sequence conflict" description="In Ref. 1; no nucleotide entry." evidence="5" ref="1">
    <original>AVG</original>
    <variation>SVF</variation>
    <location>
        <begin position="288"/>
        <end position="290"/>
    </location>
</feature>
<feature type="sequence conflict" description="In Ref. 1; no nucleotide entry." evidence="5" ref="1">
    <original>VKV</original>
    <variation>CKC</variation>
    <location>
        <begin position="324"/>
        <end position="326"/>
    </location>
</feature>
<feature type="sequence conflict" description="In Ref. 1; no nucleotide entry." evidence="5" ref="1">
    <original>L</original>
    <variation>R</variation>
    <location>
        <position position="340"/>
    </location>
</feature>
<feature type="sequence conflict" description="In Ref. 1; no nucleotide entry." evidence="5" ref="1">
    <original>EI</original>
    <variation>KL</variation>
    <location>
        <begin position="365"/>
        <end position="366"/>
    </location>
</feature>
<feature type="sequence conflict" description="In Ref. 1; no nucleotide entry." evidence="5" ref="1">
    <original>E</original>
    <variation>K</variation>
    <location>
        <position position="380"/>
    </location>
</feature>
<feature type="sequence conflict" description="In Ref. 1; no nucleotide entry." evidence="5" ref="1">
    <original>S</original>
    <variation>C</variation>
    <location>
        <position position="390"/>
    </location>
</feature>
<sequence length="439" mass="49192">MGNNQSQGQGDKGEKKDQPKYQPPPPPTQFGKKKKRRGAETSTKLPVITPHSKCKLKQLKLERIKDYLLMEQEFLQNYDLNQPKVDENSKEQADEKIIEELRGDPLTVGNLEEIIDDNHAIVSSTVGPEHYVRIMSFVDKSKLYLGATVLLNNKTLSVVGVIDGEVDPMVNVMKVEKAPTESYSDIGGLEAQVQEMKEAIELPLTHPELYEEIGIKPPKGVILYGEPGTGKTLLAKAVANQTSATFLRVVGSELIQKYLGDGPKLVRELFRVADECAPSIVFIDEIDAVGTKRYDSQSGGEREIQRTMLELLNQLDGFDARTDVKVIMATNRIETLDPALIRPGRIDRKIEFPLPDIKTKRKIFEIHTAKMNLSEDVNLEEFVMSKDDLSGADIKAICTESGLLALRERRMRVTHTDFKKAKEKVLYRKTAGAPEGLYM</sequence>
<reference key="1">
    <citation type="journal article" date="1995" name="Mol. Cell. Biol.">
        <title>Growth and developmental functions of a human immunodeficiency virus Tat-binding protein/26S protease subunit homolog from Dictyostelium discoideum.</title>
        <authorList>
            <person name="Cao J.-G."/>
            <person name="Firtel R.A."/>
        </authorList>
    </citation>
    <scope>NUCLEOTIDE SEQUENCE [MRNA]</scope>
    <scope>DEVELOPMENTAL STAGE</scope>
</reference>
<reference key="2">
    <citation type="journal article" date="2005" name="Nature">
        <title>The genome of the social amoeba Dictyostelium discoideum.</title>
        <authorList>
            <person name="Eichinger L."/>
            <person name="Pachebat J.A."/>
            <person name="Gloeckner G."/>
            <person name="Rajandream M.A."/>
            <person name="Sucgang R."/>
            <person name="Berriman M."/>
            <person name="Song J."/>
            <person name="Olsen R."/>
            <person name="Szafranski K."/>
            <person name="Xu Q."/>
            <person name="Tunggal B."/>
            <person name="Kummerfeld S."/>
            <person name="Madera M."/>
            <person name="Konfortov B.A."/>
            <person name="Rivero F."/>
            <person name="Bankier A.T."/>
            <person name="Lehmann R."/>
            <person name="Hamlin N."/>
            <person name="Davies R."/>
            <person name="Gaudet P."/>
            <person name="Fey P."/>
            <person name="Pilcher K."/>
            <person name="Chen G."/>
            <person name="Saunders D."/>
            <person name="Sodergren E.J."/>
            <person name="Davis P."/>
            <person name="Kerhornou A."/>
            <person name="Nie X."/>
            <person name="Hall N."/>
            <person name="Anjard C."/>
            <person name="Hemphill L."/>
            <person name="Bason N."/>
            <person name="Farbrother P."/>
            <person name="Desany B."/>
            <person name="Just E."/>
            <person name="Morio T."/>
            <person name="Rost R."/>
            <person name="Churcher C.M."/>
            <person name="Cooper J."/>
            <person name="Haydock S."/>
            <person name="van Driessche N."/>
            <person name="Cronin A."/>
            <person name="Goodhead I."/>
            <person name="Muzny D.M."/>
            <person name="Mourier T."/>
            <person name="Pain A."/>
            <person name="Lu M."/>
            <person name="Harper D."/>
            <person name="Lindsay R."/>
            <person name="Hauser H."/>
            <person name="James K.D."/>
            <person name="Quiles M."/>
            <person name="Madan Babu M."/>
            <person name="Saito T."/>
            <person name="Buchrieser C."/>
            <person name="Wardroper A."/>
            <person name="Felder M."/>
            <person name="Thangavelu M."/>
            <person name="Johnson D."/>
            <person name="Knights A."/>
            <person name="Loulseged H."/>
            <person name="Mungall K.L."/>
            <person name="Oliver K."/>
            <person name="Price C."/>
            <person name="Quail M.A."/>
            <person name="Urushihara H."/>
            <person name="Hernandez J."/>
            <person name="Rabbinowitsch E."/>
            <person name="Steffen D."/>
            <person name="Sanders M."/>
            <person name="Ma J."/>
            <person name="Kohara Y."/>
            <person name="Sharp S."/>
            <person name="Simmonds M.N."/>
            <person name="Spiegler S."/>
            <person name="Tivey A."/>
            <person name="Sugano S."/>
            <person name="White B."/>
            <person name="Walker D."/>
            <person name="Woodward J.R."/>
            <person name="Winckler T."/>
            <person name="Tanaka Y."/>
            <person name="Shaulsky G."/>
            <person name="Schleicher M."/>
            <person name="Weinstock G.M."/>
            <person name="Rosenthal A."/>
            <person name="Cox E.C."/>
            <person name="Chisholm R.L."/>
            <person name="Gibbs R.A."/>
            <person name="Loomis W.F."/>
            <person name="Platzer M."/>
            <person name="Kay R.R."/>
            <person name="Williams J.G."/>
            <person name="Dear P.H."/>
            <person name="Noegel A.A."/>
            <person name="Barrell B.G."/>
            <person name="Kuspa A."/>
        </authorList>
    </citation>
    <scope>NUCLEOTIDE SEQUENCE [LARGE SCALE GENOMIC DNA]</scope>
    <source>
        <strain>AX4</strain>
    </source>
</reference>
<reference key="3">
    <citation type="journal article" date="2006" name="Mol. Cell. Proteomics">
        <title>Proteomics fingerprinting of phagosome maturation and evidence for the role of a Galpha during uptake.</title>
        <authorList>
            <person name="Gotthardt D."/>
            <person name="Blancheteau V."/>
            <person name="Bosserhoff A."/>
            <person name="Ruppert T."/>
            <person name="Delorenzi M."/>
            <person name="Soldati T."/>
        </authorList>
    </citation>
    <scope>IDENTIFICATION BY MASS SPECTROMETRY [LARGE SCALE ANALYSIS]</scope>
    <source>
        <strain>AX2</strain>
    </source>
</reference>
<dbReference type="EMBL" id="AAFI02000005">
    <property type="protein sequence ID" value="EAL72742.1"/>
    <property type="molecule type" value="Genomic_DNA"/>
</dbReference>
<dbReference type="RefSeq" id="XP_646726.1">
    <property type="nucleotide sequence ID" value="XM_641634.1"/>
</dbReference>
<dbReference type="SMR" id="Q55BV5"/>
<dbReference type="FunCoup" id="Q55BV5">
    <property type="interactions" value="724"/>
</dbReference>
<dbReference type="STRING" id="44689.Q55BV5"/>
<dbReference type="PaxDb" id="44689-DDB0232964"/>
<dbReference type="EnsemblProtists" id="EAL72742">
    <property type="protein sequence ID" value="EAL72742"/>
    <property type="gene ID" value="DDB_G0270784"/>
</dbReference>
<dbReference type="GeneID" id="8617698"/>
<dbReference type="KEGG" id="ddi:DDB_G0270784"/>
<dbReference type="dictyBase" id="DDB_G0270784">
    <property type="gene designation" value="psmC1"/>
</dbReference>
<dbReference type="VEuPathDB" id="AmoebaDB:DDB_G0270784"/>
<dbReference type="eggNOG" id="KOG0726">
    <property type="taxonomic scope" value="Eukaryota"/>
</dbReference>
<dbReference type="HOGENOM" id="CLU_000688_2_3_1"/>
<dbReference type="InParanoid" id="Q55BV5"/>
<dbReference type="OMA" id="QDDTDPM"/>
<dbReference type="PhylomeDB" id="Q55BV5"/>
<dbReference type="Reactome" id="R-DDI-1236978">
    <property type="pathway name" value="Cross-presentation of soluble exogenous antigens (endosomes)"/>
</dbReference>
<dbReference type="Reactome" id="R-DDI-174084">
    <property type="pathway name" value="Autodegradation of Cdh1 by Cdh1:APC/C"/>
</dbReference>
<dbReference type="Reactome" id="R-DDI-174154">
    <property type="pathway name" value="APC/C:Cdc20 mediated degradation of Securin"/>
</dbReference>
<dbReference type="Reactome" id="R-DDI-174178">
    <property type="pathway name" value="APC/C:Cdh1 mediated degradation of Cdc20 and other APC/C:Cdh1 targeted proteins in late mitosis/early G1"/>
</dbReference>
<dbReference type="Reactome" id="R-DDI-2467813">
    <property type="pathway name" value="Separation of Sister Chromatids"/>
</dbReference>
<dbReference type="Reactome" id="R-DDI-349425">
    <property type="pathway name" value="Autodegradation of the E3 ubiquitin ligase COP1"/>
</dbReference>
<dbReference type="Reactome" id="R-DDI-382556">
    <property type="pathway name" value="ABC-family proteins mediated transport"/>
</dbReference>
<dbReference type="Reactome" id="R-DDI-450408">
    <property type="pathway name" value="AUF1 (hnRNP D0) binds and destabilizes mRNA"/>
</dbReference>
<dbReference type="Reactome" id="R-DDI-4641258">
    <property type="pathway name" value="Degradation of DVL"/>
</dbReference>
<dbReference type="Reactome" id="R-DDI-5632684">
    <property type="pathway name" value="Hedgehog 'on' state"/>
</dbReference>
<dbReference type="Reactome" id="R-DDI-5658442">
    <property type="pathway name" value="Regulation of RAS by GAPs"/>
</dbReference>
<dbReference type="Reactome" id="R-DDI-5687128">
    <property type="pathway name" value="MAPK6/MAPK4 signaling"/>
</dbReference>
<dbReference type="Reactome" id="R-DDI-5689603">
    <property type="pathway name" value="UCH proteinases"/>
</dbReference>
<dbReference type="Reactome" id="R-DDI-5689880">
    <property type="pathway name" value="Ub-specific processing proteases"/>
</dbReference>
<dbReference type="Reactome" id="R-DDI-68949">
    <property type="pathway name" value="Orc1 removal from chromatin"/>
</dbReference>
<dbReference type="Reactome" id="R-DDI-69017">
    <property type="pathway name" value="CDK-mediated phosphorylation and removal of Cdc6"/>
</dbReference>
<dbReference type="Reactome" id="R-DDI-69601">
    <property type="pathway name" value="Ubiquitin Mediated Degradation of Phosphorylated Cdc25A"/>
</dbReference>
<dbReference type="Reactome" id="R-DDI-8854050">
    <property type="pathway name" value="FBXL7 down-regulates AURKA during mitotic entry and in early mitosis"/>
</dbReference>
<dbReference type="Reactome" id="R-DDI-8948751">
    <property type="pathway name" value="Regulation of PTEN stability and activity"/>
</dbReference>
<dbReference type="Reactome" id="R-DDI-8951664">
    <property type="pathway name" value="Neddylation"/>
</dbReference>
<dbReference type="Reactome" id="R-DDI-9755511">
    <property type="pathway name" value="KEAP1-NFE2L2 pathway"/>
</dbReference>
<dbReference type="Reactome" id="R-DDI-983168">
    <property type="pathway name" value="Antigen processing: Ubiquitination &amp; Proteasome degradation"/>
</dbReference>
<dbReference type="Reactome" id="R-DDI-9907900">
    <property type="pathway name" value="Proteasome assembly"/>
</dbReference>
<dbReference type="PRO" id="PR:Q55BV5"/>
<dbReference type="Proteomes" id="UP000002195">
    <property type="component" value="Chromosome 1"/>
</dbReference>
<dbReference type="GO" id="GO:0005634">
    <property type="term" value="C:nucleus"/>
    <property type="evidence" value="ECO:0007669"/>
    <property type="project" value="UniProtKB-SubCell"/>
</dbReference>
<dbReference type="GO" id="GO:0045335">
    <property type="term" value="C:phagocytic vesicle"/>
    <property type="evidence" value="ECO:0007005"/>
    <property type="project" value="dictyBase"/>
</dbReference>
<dbReference type="GO" id="GO:0008540">
    <property type="term" value="C:proteasome regulatory particle, base subcomplex"/>
    <property type="evidence" value="ECO:0000318"/>
    <property type="project" value="GO_Central"/>
</dbReference>
<dbReference type="GO" id="GO:0005524">
    <property type="term" value="F:ATP binding"/>
    <property type="evidence" value="ECO:0007669"/>
    <property type="project" value="UniProtKB-KW"/>
</dbReference>
<dbReference type="GO" id="GO:0016887">
    <property type="term" value="F:ATP hydrolysis activity"/>
    <property type="evidence" value="ECO:0007669"/>
    <property type="project" value="InterPro"/>
</dbReference>
<dbReference type="GO" id="GO:0036402">
    <property type="term" value="F:proteasome-activating activity"/>
    <property type="evidence" value="ECO:0000318"/>
    <property type="project" value="GO_Central"/>
</dbReference>
<dbReference type="GO" id="GO:0000281">
    <property type="term" value="P:mitotic cytokinesis"/>
    <property type="evidence" value="ECO:0000315"/>
    <property type="project" value="dictyBase"/>
</dbReference>
<dbReference type="GO" id="GO:0043161">
    <property type="term" value="P:proteasome-mediated ubiquitin-dependent protein catabolic process"/>
    <property type="evidence" value="ECO:0000318"/>
    <property type="project" value="GO_Central"/>
</dbReference>
<dbReference type="GO" id="GO:0030587">
    <property type="term" value="P:sorocarp development"/>
    <property type="evidence" value="ECO:0000315"/>
    <property type="project" value="dictyBase"/>
</dbReference>
<dbReference type="CDD" id="cd19502">
    <property type="entry name" value="RecA-like_PAN_like"/>
    <property type="match status" value="1"/>
</dbReference>
<dbReference type="FunFam" id="2.40.50.140:FF:000030">
    <property type="entry name" value="26S protease regulatory subunit 4"/>
    <property type="match status" value="1"/>
</dbReference>
<dbReference type="FunFam" id="1.10.8.60:FF:000007">
    <property type="entry name" value="26S proteasome regulatory subunit 4"/>
    <property type="match status" value="1"/>
</dbReference>
<dbReference type="FunFam" id="3.40.50.300:FF:000039">
    <property type="entry name" value="26S proteasome regulatory subunit 4"/>
    <property type="match status" value="1"/>
</dbReference>
<dbReference type="Gene3D" id="1.10.8.60">
    <property type="match status" value="1"/>
</dbReference>
<dbReference type="Gene3D" id="2.40.50.140">
    <property type="entry name" value="Nucleic acid-binding proteins"/>
    <property type="match status" value="1"/>
</dbReference>
<dbReference type="Gene3D" id="3.40.50.300">
    <property type="entry name" value="P-loop containing nucleotide triphosphate hydrolases"/>
    <property type="match status" value="1"/>
</dbReference>
<dbReference type="InterPro" id="IPR050221">
    <property type="entry name" value="26S_Proteasome_ATPase"/>
</dbReference>
<dbReference type="InterPro" id="IPR003593">
    <property type="entry name" value="AAA+_ATPase"/>
</dbReference>
<dbReference type="InterPro" id="IPR041569">
    <property type="entry name" value="AAA_lid_3"/>
</dbReference>
<dbReference type="InterPro" id="IPR003959">
    <property type="entry name" value="ATPase_AAA_core"/>
</dbReference>
<dbReference type="InterPro" id="IPR003960">
    <property type="entry name" value="ATPase_AAA_CS"/>
</dbReference>
<dbReference type="InterPro" id="IPR012340">
    <property type="entry name" value="NA-bd_OB-fold"/>
</dbReference>
<dbReference type="InterPro" id="IPR027417">
    <property type="entry name" value="P-loop_NTPase"/>
</dbReference>
<dbReference type="InterPro" id="IPR032501">
    <property type="entry name" value="Prot_ATP_ID_OB_2nd"/>
</dbReference>
<dbReference type="PANTHER" id="PTHR23073">
    <property type="entry name" value="26S PROTEASOME REGULATORY SUBUNIT"/>
    <property type="match status" value="1"/>
</dbReference>
<dbReference type="Pfam" id="PF00004">
    <property type="entry name" value="AAA"/>
    <property type="match status" value="1"/>
</dbReference>
<dbReference type="Pfam" id="PF17862">
    <property type="entry name" value="AAA_lid_3"/>
    <property type="match status" value="1"/>
</dbReference>
<dbReference type="Pfam" id="PF16450">
    <property type="entry name" value="Prot_ATP_ID_OB_C"/>
    <property type="match status" value="1"/>
</dbReference>
<dbReference type="SMART" id="SM00382">
    <property type="entry name" value="AAA"/>
    <property type="match status" value="1"/>
</dbReference>
<dbReference type="SUPFAM" id="SSF52540">
    <property type="entry name" value="P-loop containing nucleoside triphosphate hydrolases"/>
    <property type="match status" value="1"/>
</dbReference>
<dbReference type="PROSITE" id="PS00674">
    <property type="entry name" value="AAA"/>
    <property type="match status" value="1"/>
</dbReference>
<organism>
    <name type="scientific">Dictyostelium discoideum</name>
    <name type="common">Social amoeba</name>
    <dbReference type="NCBI Taxonomy" id="44689"/>
    <lineage>
        <taxon>Eukaryota</taxon>
        <taxon>Amoebozoa</taxon>
        <taxon>Evosea</taxon>
        <taxon>Eumycetozoa</taxon>
        <taxon>Dictyostelia</taxon>
        <taxon>Dictyosteliales</taxon>
        <taxon>Dictyosteliaceae</taxon>
        <taxon>Dictyostelium</taxon>
    </lineage>
</organism>